<reference key="1">
    <citation type="submission" date="2007-10" db="EMBL/GenBank/DDBJ databases">
        <title>Complete sequence of Salinispora arenicola CNS-205.</title>
        <authorList>
            <consortium name="US DOE Joint Genome Institute"/>
            <person name="Copeland A."/>
            <person name="Lucas S."/>
            <person name="Lapidus A."/>
            <person name="Barry K."/>
            <person name="Glavina del Rio T."/>
            <person name="Dalin E."/>
            <person name="Tice H."/>
            <person name="Pitluck S."/>
            <person name="Foster B."/>
            <person name="Schmutz J."/>
            <person name="Larimer F."/>
            <person name="Land M."/>
            <person name="Hauser L."/>
            <person name="Kyrpides N."/>
            <person name="Ivanova N."/>
            <person name="Jensen P.R."/>
            <person name="Moore B.S."/>
            <person name="Penn K."/>
            <person name="Jenkins C."/>
            <person name="Udwary D."/>
            <person name="Xiang L."/>
            <person name="Gontang E."/>
            <person name="Richardson P."/>
        </authorList>
    </citation>
    <scope>NUCLEOTIDE SEQUENCE [LARGE SCALE GENOMIC DNA]</scope>
    <source>
        <strain>CNS-205</strain>
    </source>
</reference>
<comment type="function">
    <text evidence="1">This protein is located at the 30S-50S ribosomal subunit interface and may play a role in the structure and function of the aminoacyl-tRNA binding site.</text>
</comment>
<comment type="similarity">
    <text evidence="1">Belongs to the bacterial ribosomal protein bL19 family.</text>
</comment>
<organism>
    <name type="scientific">Salinispora arenicola (strain CNS-205)</name>
    <dbReference type="NCBI Taxonomy" id="391037"/>
    <lineage>
        <taxon>Bacteria</taxon>
        <taxon>Bacillati</taxon>
        <taxon>Actinomycetota</taxon>
        <taxon>Actinomycetes</taxon>
        <taxon>Micromonosporales</taxon>
        <taxon>Micromonosporaceae</taxon>
        <taxon>Salinispora</taxon>
    </lineage>
</organism>
<gene>
    <name evidence="1" type="primary">rplS</name>
    <name type="ordered locus">Sare_1198</name>
</gene>
<protein>
    <recommendedName>
        <fullName evidence="1">Large ribosomal subunit protein bL19</fullName>
    </recommendedName>
    <alternativeName>
        <fullName evidence="2">50S ribosomal protein L19</fullName>
    </alternativeName>
</protein>
<proteinExistence type="inferred from homology"/>
<keyword id="KW-0687">Ribonucleoprotein</keyword>
<keyword id="KW-0689">Ribosomal protein</keyword>
<feature type="chain" id="PRO_1000080367" description="Large ribosomal subunit protein bL19">
    <location>
        <begin position="1"/>
        <end position="118"/>
    </location>
</feature>
<dbReference type="EMBL" id="CP000850">
    <property type="protein sequence ID" value="ABV97106.1"/>
    <property type="molecule type" value="Genomic_DNA"/>
</dbReference>
<dbReference type="SMR" id="A8M681"/>
<dbReference type="STRING" id="391037.Sare_1198"/>
<dbReference type="KEGG" id="saq:Sare_1198"/>
<dbReference type="PATRIC" id="fig|391037.6.peg.1217"/>
<dbReference type="eggNOG" id="COG0335">
    <property type="taxonomic scope" value="Bacteria"/>
</dbReference>
<dbReference type="HOGENOM" id="CLU_103507_2_1_11"/>
<dbReference type="OrthoDB" id="9803541at2"/>
<dbReference type="GO" id="GO:0022625">
    <property type="term" value="C:cytosolic large ribosomal subunit"/>
    <property type="evidence" value="ECO:0007669"/>
    <property type="project" value="TreeGrafter"/>
</dbReference>
<dbReference type="GO" id="GO:0003735">
    <property type="term" value="F:structural constituent of ribosome"/>
    <property type="evidence" value="ECO:0007669"/>
    <property type="project" value="InterPro"/>
</dbReference>
<dbReference type="GO" id="GO:0006412">
    <property type="term" value="P:translation"/>
    <property type="evidence" value="ECO:0007669"/>
    <property type="project" value="UniProtKB-UniRule"/>
</dbReference>
<dbReference type="FunFam" id="2.30.30.790:FF:000001">
    <property type="entry name" value="50S ribosomal protein L19"/>
    <property type="match status" value="1"/>
</dbReference>
<dbReference type="Gene3D" id="2.30.30.790">
    <property type="match status" value="1"/>
</dbReference>
<dbReference type="HAMAP" id="MF_00402">
    <property type="entry name" value="Ribosomal_bL19"/>
    <property type="match status" value="1"/>
</dbReference>
<dbReference type="InterPro" id="IPR001857">
    <property type="entry name" value="Ribosomal_bL19"/>
</dbReference>
<dbReference type="InterPro" id="IPR018257">
    <property type="entry name" value="Ribosomal_bL19_CS"/>
</dbReference>
<dbReference type="InterPro" id="IPR038657">
    <property type="entry name" value="Ribosomal_bL19_sf"/>
</dbReference>
<dbReference type="InterPro" id="IPR008991">
    <property type="entry name" value="Translation_prot_SH3-like_sf"/>
</dbReference>
<dbReference type="NCBIfam" id="TIGR01024">
    <property type="entry name" value="rplS_bact"/>
    <property type="match status" value="1"/>
</dbReference>
<dbReference type="PANTHER" id="PTHR15680:SF9">
    <property type="entry name" value="LARGE RIBOSOMAL SUBUNIT PROTEIN BL19M"/>
    <property type="match status" value="1"/>
</dbReference>
<dbReference type="PANTHER" id="PTHR15680">
    <property type="entry name" value="RIBOSOMAL PROTEIN L19"/>
    <property type="match status" value="1"/>
</dbReference>
<dbReference type="Pfam" id="PF01245">
    <property type="entry name" value="Ribosomal_L19"/>
    <property type="match status" value="1"/>
</dbReference>
<dbReference type="PIRSF" id="PIRSF002191">
    <property type="entry name" value="Ribosomal_L19"/>
    <property type="match status" value="1"/>
</dbReference>
<dbReference type="PRINTS" id="PR00061">
    <property type="entry name" value="RIBOSOMALL19"/>
</dbReference>
<dbReference type="SUPFAM" id="SSF50104">
    <property type="entry name" value="Translation proteins SH3-like domain"/>
    <property type="match status" value="1"/>
</dbReference>
<dbReference type="PROSITE" id="PS01015">
    <property type="entry name" value="RIBOSOMAL_L19"/>
    <property type="match status" value="1"/>
</dbReference>
<name>RL19_SALAI</name>
<accession>A8M681</accession>
<sequence length="118" mass="13549">MNILDALDAQSKRTDLPDFRAGDTVKVHARVVEGNRSRVQIFQGVVIRRQGDGLRETFLVRKISFGVGVERTYPINSPAIDRIEVVTRGDVRRAKLYYLRELRGKKAKIKEKREKQPS</sequence>
<evidence type="ECO:0000255" key="1">
    <source>
        <dbReference type="HAMAP-Rule" id="MF_00402"/>
    </source>
</evidence>
<evidence type="ECO:0000305" key="2"/>